<evidence type="ECO:0000255" key="1">
    <source>
        <dbReference type="HAMAP-Rule" id="MF_00044"/>
    </source>
</evidence>
<comment type="function">
    <text evidence="1">Aspartyl-tRNA synthetase with relaxed tRNA specificity since it is able to aspartylate not only its cognate tRNA(Asp) but also tRNA(Asn). Reaction proceeds in two steps: L-aspartate is first activated by ATP to form Asp-AMP and then transferred to the acceptor end of tRNA(Asp/Asn).</text>
</comment>
<comment type="catalytic activity">
    <reaction evidence="1">
        <text>tRNA(Asx) + L-aspartate + ATP = L-aspartyl-tRNA(Asx) + AMP + diphosphate</text>
        <dbReference type="Rhea" id="RHEA:18349"/>
        <dbReference type="Rhea" id="RHEA-COMP:9710"/>
        <dbReference type="Rhea" id="RHEA-COMP:9711"/>
        <dbReference type="ChEBI" id="CHEBI:29991"/>
        <dbReference type="ChEBI" id="CHEBI:30616"/>
        <dbReference type="ChEBI" id="CHEBI:33019"/>
        <dbReference type="ChEBI" id="CHEBI:78442"/>
        <dbReference type="ChEBI" id="CHEBI:78516"/>
        <dbReference type="ChEBI" id="CHEBI:456215"/>
        <dbReference type="EC" id="6.1.1.23"/>
    </reaction>
</comment>
<comment type="subunit">
    <text evidence="1">Homodimer.</text>
</comment>
<comment type="subcellular location">
    <subcellularLocation>
        <location evidence="1">Cytoplasm</location>
    </subcellularLocation>
</comment>
<comment type="similarity">
    <text evidence="1">Belongs to the class-II aminoacyl-tRNA synthetase family. Type 1 subfamily.</text>
</comment>
<accession>B8FKS6</accession>
<dbReference type="EC" id="6.1.1.23" evidence="1"/>
<dbReference type="EMBL" id="CP001322">
    <property type="protein sequence ID" value="ACL04448.1"/>
    <property type="molecule type" value="Genomic_DNA"/>
</dbReference>
<dbReference type="RefSeq" id="WP_015947518.1">
    <property type="nucleotide sequence ID" value="NC_011768.1"/>
</dbReference>
<dbReference type="SMR" id="B8FKS6"/>
<dbReference type="KEGG" id="dal:Dalk_2756"/>
<dbReference type="eggNOG" id="COG0173">
    <property type="taxonomic scope" value="Bacteria"/>
</dbReference>
<dbReference type="HOGENOM" id="CLU_014330_3_2_7"/>
<dbReference type="Proteomes" id="UP000000739">
    <property type="component" value="Chromosome"/>
</dbReference>
<dbReference type="GO" id="GO:0005737">
    <property type="term" value="C:cytoplasm"/>
    <property type="evidence" value="ECO:0007669"/>
    <property type="project" value="UniProtKB-SubCell"/>
</dbReference>
<dbReference type="GO" id="GO:0004815">
    <property type="term" value="F:aspartate-tRNA ligase activity"/>
    <property type="evidence" value="ECO:0007669"/>
    <property type="project" value="UniProtKB-UniRule"/>
</dbReference>
<dbReference type="GO" id="GO:0050560">
    <property type="term" value="F:aspartate-tRNA(Asn) ligase activity"/>
    <property type="evidence" value="ECO:0007669"/>
    <property type="project" value="UniProtKB-EC"/>
</dbReference>
<dbReference type="GO" id="GO:0005524">
    <property type="term" value="F:ATP binding"/>
    <property type="evidence" value="ECO:0007669"/>
    <property type="project" value="UniProtKB-UniRule"/>
</dbReference>
<dbReference type="GO" id="GO:0003676">
    <property type="term" value="F:nucleic acid binding"/>
    <property type="evidence" value="ECO:0007669"/>
    <property type="project" value="InterPro"/>
</dbReference>
<dbReference type="GO" id="GO:0006422">
    <property type="term" value="P:aspartyl-tRNA aminoacylation"/>
    <property type="evidence" value="ECO:0007669"/>
    <property type="project" value="UniProtKB-UniRule"/>
</dbReference>
<dbReference type="CDD" id="cd00777">
    <property type="entry name" value="AspRS_core"/>
    <property type="match status" value="1"/>
</dbReference>
<dbReference type="CDD" id="cd04317">
    <property type="entry name" value="EcAspRS_like_N"/>
    <property type="match status" value="1"/>
</dbReference>
<dbReference type="Gene3D" id="3.30.930.10">
    <property type="entry name" value="Bira Bifunctional Protein, Domain 2"/>
    <property type="match status" value="1"/>
</dbReference>
<dbReference type="Gene3D" id="3.30.1360.30">
    <property type="entry name" value="GAD-like domain"/>
    <property type="match status" value="1"/>
</dbReference>
<dbReference type="Gene3D" id="2.40.50.140">
    <property type="entry name" value="Nucleic acid-binding proteins"/>
    <property type="match status" value="1"/>
</dbReference>
<dbReference type="HAMAP" id="MF_00044">
    <property type="entry name" value="Asp_tRNA_synth_type1"/>
    <property type="match status" value="1"/>
</dbReference>
<dbReference type="InterPro" id="IPR004364">
    <property type="entry name" value="Aa-tRNA-synt_II"/>
</dbReference>
<dbReference type="InterPro" id="IPR006195">
    <property type="entry name" value="aa-tRNA-synth_II"/>
</dbReference>
<dbReference type="InterPro" id="IPR045864">
    <property type="entry name" value="aa-tRNA-synth_II/BPL/LPL"/>
</dbReference>
<dbReference type="InterPro" id="IPR004524">
    <property type="entry name" value="Asp-tRNA-ligase_1"/>
</dbReference>
<dbReference type="InterPro" id="IPR047089">
    <property type="entry name" value="Asp-tRNA-ligase_1_N"/>
</dbReference>
<dbReference type="InterPro" id="IPR002312">
    <property type="entry name" value="Asp/Asn-tRNA-synth_IIb"/>
</dbReference>
<dbReference type="InterPro" id="IPR047090">
    <property type="entry name" value="AspRS_core"/>
</dbReference>
<dbReference type="InterPro" id="IPR004115">
    <property type="entry name" value="GAD-like_sf"/>
</dbReference>
<dbReference type="InterPro" id="IPR029351">
    <property type="entry name" value="GAD_dom"/>
</dbReference>
<dbReference type="InterPro" id="IPR012340">
    <property type="entry name" value="NA-bd_OB-fold"/>
</dbReference>
<dbReference type="InterPro" id="IPR004365">
    <property type="entry name" value="NA-bd_OB_tRNA"/>
</dbReference>
<dbReference type="NCBIfam" id="TIGR00459">
    <property type="entry name" value="aspS_bact"/>
    <property type="match status" value="1"/>
</dbReference>
<dbReference type="NCBIfam" id="NF001750">
    <property type="entry name" value="PRK00476.1"/>
    <property type="match status" value="1"/>
</dbReference>
<dbReference type="PANTHER" id="PTHR22594:SF5">
    <property type="entry name" value="ASPARTATE--TRNA LIGASE, MITOCHONDRIAL"/>
    <property type="match status" value="1"/>
</dbReference>
<dbReference type="PANTHER" id="PTHR22594">
    <property type="entry name" value="ASPARTYL/LYSYL-TRNA SYNTHETASE"/>
    <property type="match status" value="1"/>
</dbReference>
<dbReference type="Pfam" id="PF02938">
    <property type="entry name" value="GAD"/>
    <property type="match status" value="1"/>
</dbReference>
<dbReference type="Pfam" id="PF00152">
    <property type="entry name" value="tRNA-synt_2"/>
    <property type="match status" value="1"/>
</dbReference>
<dbReference type="Pfam" id="PF01336">
    <property type="entry name" value="tRNA_anti-codon"/>
    <property type="match status" value="1"/>
</dbReference>
<dbReference type="PRINTS" id="PR01042">
    <property type="entry name" value="TRNASYNTHASP"/>
</dbReference>
<dbReference type="SUPFAM" id="SSF55681">
    <property type="entry name" value="Class II aaRS and biotin synthetases"/>
    <property type="match status" value="1"/>
</dbReference>
<dbReference type="SUPFAM" id="SSF55261">
    <property type="entry name" value="GAD domain-like"/>
    <property type="match status" value="1"/>
</dbReference>
<dbReference type="SUPFAM" id="SSF50249">
    <property type="entry name" value="Nucleic acid-binding proteins"/>
    <property type="match status" value="1"/>
</dbReference>
<dbReference type="PROSITE" id="PS50862">
    <property type="entry name" value="AA_TRNA_LIGASE_II"/>
    <property type="match status" value="1"/>
</dbReference>
<sequence length="597" mass="67405">MADLLGSMRRTHNCGVLRKEDTGKTVTLMGWAQRWRDHGGVIFIDLRDRYGVTQVVFNPENNAEVHKLADSIRSEWVIAVQGEVLERPDGMVNPKMETGEIEVMVSDLKILNKSKTPPFMVEDNAEVSENLRLEYRYLDLRRPRIAKNIMLRHQVGACVRAFLNENEFLDIETPVLTKSTPEGARDYLVPSRVNTGLFYALPQSPQLFKQLLMVAGYDRYYQIVRCFRDEDLRADRQPEFTQIDLEMSFVGEEDVMGIAEQMIAKVFKDVMGKEVKTPFDRLTYKDAMDRYGLDKPDLRFDLELKEVSSIVEGSDFKVFASVVKKGGMVKAMNAKGCAHFSRKVIDDLTAFVAVYGAKGLAWIKVKEDGSWQSPIAKFFTDDEKAAMAQTLDMAPGDLIFFVADNVKVTNDALGHLRNRVAKELGLIDENEFRFVWVTEFPLVEYDETDKRYVALHHPFTAPMEEDLDLLESDPGAVRSRAYDMVLNGTELGGGSIRIHQPEMQEKVFNMLGLGQEEAEEKFGFLLKALAFGAPPHGGLAFGFDRLIMLLSGENSIRDIIPFPKTQKAACLLTDAPSEVAFEQLAELALRIKKDPAS</sequence>
<proteinExistence type="inferred from homology"/>
<feature type="chain" id="PRO_1000198978" description="Aspartate--tRNA(Asp/Asn) ligase">
    <location>
        <begin position="1"/>
        <end position="597"/>
    </location>
</feature>
<feature type="region of interest" description="Aspartate" evidence="1">
    <location>
        <begin position="206"/>
        <end position="209"/>
    </location>
</feature>
<feature type="binding site" evidence="1">
    <location>
        <position position="182"/>
    </location>
    <ligand>
        <name>L-aspartate</name>
        <dbReference type="ChEBI" id="CHEBI:29991"/>
    </ligand>
</feature>
<feature type="binding site" evidence="1">
    <location>
        <begin position="228"/>
        <end position="230"/>
    </location>
    <ligand>
        <name>ATP</name>
        <dbReference type="ChEBI" id="CHEBI:30616"/>
    </ligand>
</feature>
<feature type="binding site" evidence="1">
    <location>
        <position position="228"/>
    </location>
    <ligand>
        <name>L-aspartate</name>
        <dbReference type="ChEBI" id="CHEBI:29991"/>
    </ligand>
</feature>
<feature type="binding site" evidence="1">
    <location>
        <position position="237"/>
    </location>
    <ligand>
        <name>ATP</name>
        <dbReference type="ChEBI" id="CHEBI:30616"/>
    </ligand>
</feature>
<feature type="binding site" evidence="1">
    <location>
        <position position="456"/>
    </location>
    <ligand>
        <name>L-aspartate</name>
        <dbReference type="ChEBI" id="CHEBI:29991"/>
    </ligand>
</feature>
<feature type="binding site" evidence="1">
    <location>
        <position position="490"/>
    </location>
    <ligand>
        <name>ATP</name>
        <dbReference type="ChEBI" id="CHEBI:30616"/>
    </ligand>
</feature>
<feature type="binding site" evidence="1">
    <location>
        <position position="497"/>
    </location>
    <ligand>
        <name>L-aspartate</name>
        <dbReference type="ChEBI" id="CHEBI:29991"/>
    </ligand>
</feature>
<feature type="binding site" evidence="1">
    <location>
        <begin position="542"/>
        <end position="545"/>
    </location>
    <ligand>
        <name>ATP</name>
        <dbReference type="ChEBI" id="CHEBI:30616"/>
    </ligand>
</feature>
<feature type="site" description="Important for tRNA non-discrimination" evidence="1">
    <location>
        <position position="38"/>
    </location>
</feature>
<feature type="site" description="Important for tRNA non-discrimination" evidence="1">
    <location>
        <position position="90"/>
    </location>
</feature>
<organism>
    <name type="scientific">Desulfatibacillum aliphaticivorans</name>
    <dbReference type="NCBI Taxonomy" id="218208"/>
    <lineage>
        <taxon>Bacteria</taxon>
        <taxon>Pseudomonadati</taxon>
        <taxon>Thermodesulfobacteriota</taxon>
        <taxon>Desulfobacteria</taxon>
        <taxon>Desulfobacterales</taxon>
        <taxon>Desulfatibacillaceae</taxon>
        <taxon>Desulfatibacillum</taxon>
    </lineage>
</organism>
<keyword id="KW-0030">Aminoacyl-tRNA synthetase</keyword>
<keyword id="KW-0067">ATP-binding</keyword>
<keyword id="KW-0963">Cytoplasm</keyword>
<keyword id="KW-0436">Ligase</keyword>
<keyword id="KW-0547">Nucleotide-binding</keyword>
<keyword id="KW-0648">Protein biosynthesis</keyword>
<keyword id="KW-1185">Reference proteome</keyword>
<gene>
    <name evidence="1" type="primary">aspS</name>
    <name type="ordered locus">Dalk_2756</name>
</gene>
<name>SYDND_DESAL</name>
<reference key="1">
    <citation type="journal article" date="2012" name="Environ. Microbiol.">
        <title>The genome sequence of Desulfatibacillum alkenivorans AK-01: a blueprint for anaerobic alkane oxidation.</title>
        <authorList>
            <person name="Callaghan A.V."/>
            <person name="Morris B.E."/>
            <person name="Pereira I.A."/>
            <person name="McInerney M.J."/>
            <person name="Austin R.N."/>
            <person name="Groves J.T."/>
            <person name="Kukor J.J."/>
            <person name="Suflita J.M."/>
            <person name="Young L.Y."/>
            <person name="Zylstra G.J."/>
            <person name="Wawrik B."/>
        </authorList>
    </citation>
    <scope>NUCLEOTIDE SEQUENCE [LARGE SCALE GENOMIC DNA]</scope>
    <source>
        <strain>AK-01</strain>
    </source>
</reference>
<protein>
    <recommendedName>
        <fullName evidence="1">Aspartate--tRNA(Asp/Asn) ligase</fullName>
        <ecNumber evidence="1">6.1.1.23</ecNumber>
    </recommendedName>
    <alternativeName>
        <fullName evidence="1">Aspartyl-tRNA synthetase</fullName>
        <shortName evidence="1">AspRS</shortName>
    </alternativeName>
    <alternativeName>
        <fullName evidence="1">Non-discriminating aspartyl-tRNA synthetase</fullName>
        <shortName evidence="1">ND-AspRS</shortName>
    </alternativeName>
</protein>